<protein>
    <recommendedName>
        <fullName evidence="1">Urease subunit gamma</fullName>
        <ecNumber evidence="1">3.5.1.5</ecNumber>
    </recommendedName>
    <alternativeName>
        <fullName evidence="1">Urea amidohydrolase subunit gamma</fullName>
    </alternativeName>
</protein>
<keyword id="KW-0963">Cytoplasm</keyword>
<keyword id="KW-0378">Hydrolase</keyword>
<sequence length="100" mass="11083">MHLTSREQEKLMLFLAGELAAKRKARGVKLNYPETIAYIASHLQEAARDGMSVAEVMQYGATLLTVDDVMEGVAEMVHEVQIEATFPDGTKLVTVHNPIR</sequence>
<evidence type="ECO:0000255" key="1">
    <source>
        <dbReference type="HAMAP-Rule" id="MF_00739"/>
    </source>
</evidence>
<dbReference type="EC" id="3.5.1.5" evidence="1"/>
<dbReference type="EMBL" id="CP000057">
    <property type="protein sequence ID" value="AAX87590.1"/>
    <property type="molecule type" value="Genomic_DNA"/>
</dbReference>
<dbReference type="RefSeq" id="WP_005651922.1">
    <property type="nucleotide sequence ID" value="NC_007146.2"/>
</dbReference>
<dbReference type="SMR" id="Q4QN07"/>
<dbReference type="GeneID" id="93219550"/>
<dbReference type="KEGG" id="hit:NTHI0667"/>
<dbReference type="HOGENOM" id="CLU_145825_1_0_6"/>
<dbReference type="UniPathway" id="UPA00258">
    <property type="reaction ID" value="UER00370"/>
</dbReference>
<dbReference type="Proteomes" id="UP000002525">
    <property type="component" value="Chromosome"/>
</dbReference>
<dbReference type="GO" id="GO:0005737">
    <property type="term" value="C:cytoplasm"/>
    <property type="evidence" value="ECO:0007669"/>
    <property type="project" value="UniProtKB-SubCell"/>
</dbReference>
<dbReference type="GO" id="GO:0016151">
    <property type="term" value="F:nickel cation binding"/>
    <property type="evidence" value="ECO:0007669"/>
    <property type="project" value="InterPro"/>
</dbReference>
<dbReference type="GO" id="GO:0009039">
    <property type="term" value="F:urease activity"/>
    <property type="evidence" value="ECO:0007669"/>
    <property type="project" value="UniProtKB-UniRule"/>
</dbReference>
<dbReference type="GO" id="GO:0043419">
    <property type="term" value="P:urea catabolic process"/>
    <property type="evidence" value="ECO:0007669"/>
    <property type="project" value="UniProtKB-UniRule"/>
</dbReference>
<dbReference type="CDD" id="cd00390">
    <property type="entry name" value="Urease_gamma"/>
    <property type="match status" value="1"/>
</dbReference>
<dbReference type="Gene3D" id="3.30.280.10">
    <property type="entry name" value="Urease, gamma-like subunit"/>
    <property type="match status" value="1"/>
</dbReference>
<dbReference type="HAMAP" id="MF_00739">
    <property type="entry name" value="Urease_gamma"/>
    <property type="match status" value="1"/>
</dbReference>
<dbReference type="InterPro" id="IPR012010">
    <property type="entry name" value="Urease_gamma"/>
</dbReference>
<dbReference type="InterPro" id="IPR002026">
    <property type="entry name" value="Urease_gamma/gamma-beta_su"/>
</dbReference>
<dbReference type="InterPro" id="IPR036463">
    <property type="entry name" value="Urease_gamma_sf"/>
</dbReference>
<dbReference type="InterPro" id="IPR050069">
    <property type="entry name" value="Urease_subunit"/>
</dbReference>
<dbReference type="NCBIfam" id="NF009712">
    <property type="entry name" value="PRK13241.1"/>
    <property type="match status" value="1"/>
</dbReference>
<dbReference type="NCBIfam" id="TIGR00193">
    <property type="entry name" value="urease_gam"/>
    <property type="match status" value="1"/>
</dbReference>
<dbReference type="PANTHER" id="PTHR33569">
    <property type="entry name" value="UREASE"/>
    <property type="match status" value="1"/>
</dbReference>
<dbReference type="PANTHER" id="PTHR33569:SF1">
    <property type="entry name" value="UREASE"/>
    <property type="match status" value="1"/>
</dbReference>
<dbReference type="Pfam" id="PF00547">
    <property type="entry name" value="Urease_gamma"/>
    <property type="match status" value="1"/>
</dbReference>
<dbReference type="PIRSF" id="PIRSF001223">
    <property type="entry name" value="Urease_gamma"/>
    <property type="match status" value="1"/>
</dbReference>
<dbReference type="SUPFAM" id="SSF54111">
    <property type="entry name" value="Urease, gamma-subunit"/>
    <property type="match status" value="1"/>
</dbReference>
<gene>
    <name evidence="1" type="primary">ureA</name>
    <name type="ordered locus">NTHI0667</name>
</gene>
<accession>Q4QN07</accession>
<name>URE3_HAEI8</name>
<reference key="1">
    <citation type="journal article" date="2005" name="J. Bacteriol.">
        <title>Genomic sequence of an otitis media isolate of nontypeable Haemophilus influenzae: comparative study with H. influenzae serotype d, strain KW20.</title>
        <authorList>
            <person name="Harrison A."/>
            <person name="Dyer D.W."/>
            <person name="Gillaspy A."/>
            <person name="Ray W.C."/>
            <person name="Mungur R."/>
            <person name="Carson M.B."/>
            <person name="Zhong H."/>
            <person name="Gipson J."/>
            <person name="Gipson M."/>
            <person name="Johnson L.S."/>
            <person name="Lewis L."/>
            <person name="Bakaletz L.O."/>
            <person name="Munson R.S. Jr."/>
        </authorList>
    </citation>
    <scope>NUCLEOTIDE SEQUENCE [LARGE SCALE GENOMIC DNA]</scope>
    <source>
        <strain>86-028NP</strain>
    </source>
</reference>
<feature type="chain" id="PRO_0000234205" description="Urease subunit gamma">
    <location>
        <begin position="1"/>
        <end position="100"/>
    </location>
</feature>
<organism>
    <name type="scientific">Haemophilus influenzae (strain 86-028NP)</name>
    <dbReference type="NCBI Taxonomy" id="281310"/>
    <lineage>
        <taxon>Bacteria</taxon>
        <taxon>Pseudomonadati</taxon>
        <taxon>Pseudomonadota</taxon>
        <taxon>Gammaproteobacteria</taxon>
        <taxon>Pasteurellales</taxon>
        <taxon>Pasteurellaceae</taxon>
        <taxon>Haemophilus</taxon>
    </lineage>
</organism>
<proteinExistence type="inferred from homology"/>
<comment type="catalytic activity">
    <reaction evidence="1">
        <text>urea + 2 H2O + H(+) = hydrogencarbonate + 2 NH4(+)</text>
        <dbReference type="Rhea" id="RHEA:20557"/>
        <dbReference type="ChEBI" id="CHEBI:15377"/>
        <dbReference type="ChEBI" id="CHEBI:15378"/>
        <dbReference type="ChEBI" id="CHEBI:16199"/>
        <dbReference type="ChEBI" id="CHEBI:17544"/>
        <dbReference type="ChEBI" id="CHEBI:28938"/>
        <dbReference type="EC" id="3.5.1.5"/>
    </reaction>
</comment>
<comment type="pathway">
    <text evidence="1">Nitrogen metabolism; urea degradation; CO(2) and NH(3) from urea (urease route): step 1/1.</text>
</comment>
<comment type="subunit">
    <text evidence="1">Heterotrimer of UreA (gamma), UreB (beta) and UreC (alpha) subunits. Three heterotrimers associate to form the active enzyme.</text>
</comment>
<comment type="subcellular location">
    <subcellularLocation>
        <location evidence="1">Cytoplasm</location>
    </subcellularLocation>
</comment>
<comment type="similarity">
    <text evidence="1">Belongs to the urease gamma subunit family.</text>
</comment>